<gene>
    <name evidence="12" type="primary">CFAP61</name>
    <name evidence="12" type="synonym">C20orf26</name>
</gene>
<proteinExistence type="evidence at protein level"/>
<reference key="1">
    <citation type="journal article" date="2004" name="Nat. Genet.">
        <title>Complete sequencing and characterization of 21,243 full-length human cDNAs.</title>
        <authorList>
            <person name="Ota T."/>
            <person name="Suzuki Y."/>
            <person name="Nishikawa T."/>
            <person name="Otsuki T."/>
            <person name="Sugiyama T."/>
            <person name="Irie R."/>
            <person name="Wakamatsu A."/>
            <person name="Hayashi K."/>
            <person name="Sato H."/>
            <person name="Nagai K."/>
            <person name="Kimura K."/>
            <person name="Makita H."/>
            <person name="Sekine M."/>
            <person name="Obayashi M."/>
            <person name="Nishi T."/>
            <person name="Shibahara T."/>
            <person name="Tanaka T."/>
            <person name="Ishii S."/>
            <person name="Yamamoto J."/>
            <person name="Saito K."/>
            <person name="Kawai Y."/>
            <person name="Isono Y."/>
            <person name="Nakamura Y."/>
            <person name="Nagahari K."/>
            <person name="Murakami K."/>
            <person name="Yasuda T."/>
            <person name="Iwayanagi T."/>
            <person name="Wagatsuma M."/>
            <person name="Shiratori A."/>
            <person name="Sudo H."/>
            <person name="Hosoiri T."/>
            <person name="Kaku Y."/>
            <person name="Kodaira H."/>
            <person name="Kondo H."/>
            <person name="Sugawara M."/>
            <person name="Takahashi M."/>
            <person name="Kanda K."/>
            <person name="Yokoi T."/>
            <person name="Furuya T."/>
            <person name="Kikkawa E."/>
            <person name="Omura Y."/>
            <person name="Abe K."/>
            <person name="Kamihara K."/>
            <person name="Katsuta N."/>
            <person name="Sato K."/>
            <person name="Tanikawa M."/>
            <person name="Yamazaki M."/>
            <person name="Ninomiya K."/>
            <person name="Ishibashi T."/>
            <person name="Yamashita H."/>
            <person name="Murakawa K."/>
            <person name="Fujimori K."/>
            <person name="Tanai H."/>
            <person name="Kimata M."/>
            <person name="Watanabe M."/>
            <person name="Hiraoka S."/>
            <person name="Chiba Y."/>
            <person name="Ishida S."/>
            <person name="Ono Y."/>
            <person name="Takiguchi S."/>
            <person name="Watanabe S."/>
            <person name="Yosida M."/>
            <person name="Hotuta T."/>
            <person name="Kusano J."/>
            <person name="Kanehori K."/>
            <person name="Takahashi-Fujii A."/>
            <person name="Hara H."/>
            <person name="Tanase T.-O."/>
            <person name="Nomura Y."/>
            <person name="Togiya S."/>
            <person name="Komai F."/>
            <person name="Hara R."/>
            <person name="Takeuchi K."/>
            <person name="Arita M."/>
            <person name="Imose N."/>
            <person name="Musashino K."/>
            <person name="Yuuki H."/>
            <person name="Oshima A."/>
            <person name="Sasaki N."/>
            <person name="Aotsuka S."/>
            <person name="Yoshikawa Y."/>
            <person name="Matsunawa H."/>
            <person name="Ichihara T."/>
            <person name="Shiohata N."/>
            <person name="Sano S."/>
            <person name="Moriya S."/>
            <person name="Momiyama H."/>
            <person name="Satoh N."/>
            <person name="Takami S."/>
            <person name="Terashima Y."/>
            <person name="Suzuki O."/>
            <person name="Nakagawa S."/>
            <person name="Senoh A."/>
            <person name="Mizoguchi H."/>
            <person name="Goto Y."/>
            <person name="Shimizu F."/>
            <person name="Wakebe H."/>
            <person name="Hishigaki H."/>
            <person name="Watanabe T."/>
            <person name="Sugiyama A."/>
            <person name="Takemoto M."/>
            <person name="Kawakami B."/>
            <person name="Yamazaki M."/>
            <person name="Watanabe K."/>
            <person name="Kumagai A."/>
            <person name="Itakura S."/>
            <person name="Fukuzumi Y."/>
            <person name="Fujimori Y."/>
            <person name="Komiyama M."/>
            <person name="Tashiro H."/>
            <person name="Tanigami A."/>
            <person name="Fujiwara T."/>
            <person name="Ono T."/>
            <person name="Yamada K."/>
            <person name="Fujii Y."/>
            <person name="Ozaki K."/>
            <person name="Hirao M."/>
            <person name="Ohmori Y."/>
            <person name="Kawabata A."/>
            <person name="Hikiji T."/>
            <person name="Kobatake N."/>
            <person name="Inagaki H."/>
            <person name="Ikema Y."/>
            <person name="Okamoto S."/>
            <person name="Okitani R."/>
            <person name="Kawakami T."/>
            <person name="Noguchi S."/>
            <person name="Itoh T."/>
            <person name="Shigeta K."/>
            <person name="Senba T."/>
            <person name="Matsumura K."/>
            <person name="Nakajima Y."/>
            <person name="Mizuno T."/>
            <person name="Morinaga M."/>
            <person name="Sasaki M."/>
            <person name="Togashi T."/>
            <person name="Oyama M."/>
            <person name="Hata H."/>
            <person name="Watanabe M."/>
            <person name="Komatsu T."/>
            <person name="Mizushima-Sugano J."/>
            <person name="Satoh T."/>
            <person name="Shirai Y."/>
            <person name="Takahashi Y."/>
            <person name="Nakagawa K."/>
            <person name="Okumura K."/>
            <person name="Nagase T."/>
            <person name="Nomura N."/>
            <person name="Kikuchi H."/>
            <person name="Masuho Y."/>
            <person name="Yamashita R."/>
            <person name="Nakai K."/>
            <person name="Yada T."/>
            <person name="Nakamura Y."/>
            <person name="Ohara O."/>
            <person name="Isogai T."/>
            <person name="Sugano S."/>
        </authorList>
    </citation>
    <scope>NUCLEOTIDE SEQUENCE [LARGE SCALE MRNA] (ISOFORM 6)</scope>
    <source>
        <tissue>Testis</tissue>
    </source>
</reference>
<reference key="2">
    <citation type="journal article" date="2007" name="BMC Genomics">
        <title>The full-ORF clone resource of the German cDNA consortium.</title>
        <authorList>
            <person name="Bechtel S."/>
            <person name="Rosenfelder H."/>
            <person name="Duda A."/>
            <person name="Schmidt C.P."/>
            <person name="Ernst U."/>
            <person name="Wellenreuther R."/>
            <person name="Mehrle A."/>
            <person name="Schuster C."/>
            <person name="Bahr A."/>
            <person name="Bloecker H."/>
            <person name="Heubner D."/>
            <person name="Hoerlein A."/>
            <person name="Michel G."/>
            <person name="Wedler H."/>
            <person name="Koehrer K."/>
            <person name="Ottenwaelder B."/>
            <person name="Poustka A."/>
            <person name="Wiemann S."/>
            <person name="Schupp I."/>
        </authorList>
    </citation>
    <scope>NUCLEOTIDE SEQUENCE [LARGE SCALE MRNA] (ISOFORM 3)</scope>
    <source>
        <tissue>Testis</tissue>
    </source>
</reference>
<reference key="3">
    <citation type="journal article" date="2001" name="Nature">
        <title>The DNA sequence and comparative analysis of human chromosome 20.</title>
        <authorList>
            <person name="Deloukas P."/>
            <person name="Matthews L.H."/>
            <person name="Ashurst J.L."/>
            <person name="Burton J."/>
            <person name="Gilbert J.G.R."/>
            <person name="Jones M."/>
            <person name="Stavrides G."/>
            <person name="Almeida J.P."/>
            <person name="Babbage A.K."/>
            <person name="Bagguley C.L."/>
            <person name="Bailey J."/>
            <person name="Barlow K.F."/>
            <person name="Bates K.N."/>
            <person name="Beard L.M."/>
            <person name="Beare D.M."/>
            <person name="Beasley O.P."/>
            <person name="Bird C.P."/>
            <person name="Blakey S.E."/>
            <person name="Bridgeman A.M."/>
            <person name="Brown A.J."/>
            <person name="Buck D."/>
            <person name="Burrill W.D."/>
            <person name="Butler A.P."/>
            <person name="Carder C."/>
            <person name="Carter N.P."/>
            <person name="Chapman J.C."/>
            <person name="Clamp M."/>
            <person name="Clark G."/>
            <person name="Clark L.N."/>
            <person name="Clark S.Y."/>
            <person name="Clee C.M."/>
            <person name="Clegg S."/>
            <person name="Cobley V.E."/>
            <person name="Collier R.E."/>
            <person name="Connor R.E."/>
            <person name="Corby N.R."/>
            <person name="Coulson A."/>
            <person name="Coville G.J."/>
            <person name="Deadman R."/>
            <person name="Dhami P.D."/>
            <person name="Dunn M."/>
            <person name="Ellington A.G."/>
            <person name="Frankland J.A."/>
            <person name="Fraser A."/>
            <person name="French L."/>
            <person name="Garner P."/>
            <person name="Grafham D.V."/>
            <person name="Griffiths C."/>
            <person name="Griffiths M.N.D."/>
            <person name="Gwilliam R."/>
            <person name="Hall R.E."/>
            <person name="Hammond S."/>
            <person name="Harley J.L."/>
            <person name="Heath P.D."/>
            <person name="Ho S."/>
            <person name="Holden J.L."/>
            <person name="Howden P.J."/>
            <person name="Huckle E."/>
            <person name="Hunt A.R."/>
            <person name="Hunt S.E."/>
            <person name="Jekosch K."/>
            <person name="Johnson C.M."/>
            <person name="Johnson D."/>
            <person name="Kay M.P."/>
            <person name="Kimberley A.M."/>
            <person name="King A."/>
            <person name="Knights A."/>
            <person name="Laird G.K."/>
            <person name="Lawlor S."/>
            <person name="Lehvaeslaiho M.H."/>
            <person name="Leversha M.A."/>
            <person name="Lloyd C."/>
            <person name="Lloyd D.M."/>
            <person name="Lovell J.D."/>
            <person name="Marsh V.L."/>
            <person name="Martin S.L."/>
            <person name="McConnachie L.J."/>
            <person name="McLay K."/>
            <person name="McMurray A.A."/>
            <person name="Milne S.A."/>
            <person name="Mistry D."/>
            <person name="Moore M.J.F."/>
            <person name="Mullikin J.C."/>
            <person name="Nickerson T."/>
            <person name="Oliver K."/>
            <person name="Parker A."/>
            <person name="Patel R."/>
            <person name="Pearce T.A.V."/>
            <person name="Peck A.I."/>
            <person name="Phillimore B.J.C.T."/>
            <person name="Prathalingam S.R."/>
            <person name="Plumb R.W."/>
            <person name="Ramsay H."/>
            <person name="Rice C.M."/>
            <person name="Ross M.T."/>
            <person name="Scott C.E."/>
            <person name="Sehra H.K."/>
            <person name="Shownkeen R."/>
            <person name="Sims S."/>
            <person name="Skuce C.D."/>
            <person name="Smith M.L."/>
            <person name="Soderlund C."/>
            <person name="Steward C.A."/>
            <person name="Sulston J.E."/>
            <person name="Swann R.M."/>
            <person name="Sycamore N."/>
            <person name="Taylor R."/>
            <person name="Tee L."/>
            <person name="Thomas D.W."/>
            <person name="Thorpe A."/>
            <person name="Tracey A."/>
            <person name="Tromans A.C."/>
            <person name="Vaudin M."/>
            <person name="Wall M."/>
            <person name="Wallis J.M."/>
            <person name="Whitehead S.L."/>
            <person name="Whittaker P."/>
            <person name="Willey D.L."/>
            <person name="Williams L."/>
            <person name="Williams S.A."/>
            <person name="Wilming L."/>
            <person name="Wray P.W."/>
            <person name="Hubbard T."/>
            <person name="Durbin R.M."/>
            <person name="Bentley D.R."/>
            <person name="Beck S."/>
            <person name="Rogers J."/>
        </authorList>
    </citation>
    <scope>NUCLEOTIDE SEQUENCE [LARGE SCALE GENOMIC DNA]</scope>
</reference>
<reference key="4">
    <citation type="journal article" date="2004" name="Genome Res.">
        <title>The status, quality, and expansion of the NIH full-length cDNA project: the Mammalian Gene Collection (MGC).</title>
        <authorList>
            <consortium name="The MGC Project Team"/>
        </authorList>
    </citation>
    <scope>NUCLEOTIDE SEQUENCE [LARGE SCALE MRNA] (ISOFORMS 1 AND 5)</scope>
    <scope>VARIANTS ARG-74 AND ILE-369</scope>
    <source>
        <tissue>Brain</tissue>
        <tissue>Testis</tissue>
    </source>
</reference>
<reference key="5">
    <citation type="submission" date="2000-03" db="EMBL/GenBank/DDBJ databases">
        <title>The WashU-Merck EST project.</title>
        <authorList>
            <person name="Hillier L."/>
            <person name="Clark N."/>
            <person name="Dubuque T."/>
            <person name="Elliston K."/>
            <person name="Hawkins M."/>
            <person name="Holman M."/>
            <person name="Hultman M."/>
            <person name="Kucaba T."/>
            <person name="Le M."/>
            <person name="Lennon G."/>
            <person name="Marra M."/>
            <person name="Parsons J."/>
            <person name="Rifkin L."/>
            <person name="Rohlfing T."/>
            <person name="Soares M."/>
            <person name="Tan F."/>
            <person name="Trevaskis E."/>
            <person name="Waterston R."/>
            <person name="Williamson A."/>
            <person name="Wohldmann P."/>
            <person name="Wilson R."/>
        </authorList>
    </citation>
    <scope>NUCLEOTIDE SEQUENCE OF 287-409 (ISOFORM 4)</scope>
</reference>
<reference key="6">
    <citation type="journal article" date="2021" name="Development">
        <title>CFAP61 is required for sperm flagellum formation and male fertility in human and mouse.</title>
        <authorList>
            <person name="Liu S."/>
            <person name="Zhang J."/>
            <person name="Kherraf Z.E."/>
            <person name="Sun S."/>
            <person name="Zhang X."/>
            <person name="Cazin C."/>
            <person name="Coutton C."/>
            <person name="Zouari R."/>
            <person name="Zhao S."/>
            <person name="Hu F."/>
            <person name="Fourati Ben Mustapha S."/>
            <person name="Arnoult C."/>
            <person name="Ray P.F."/>
            <person name="Liu M."/>
        </authorList>
    </citation>
    <scope>FUNCTION</scope>
    <scope>INVOLVEMENT IN SPGF84</scope>
</reference>
<reference key="7">
    <citation type="journal article" date="2012" name="N. Engl. J. Med.">
        <title>Diagnostic exome sequencing in persons with severe intellectual disability.</title>
        <authorList>
            <person name="de Ligt J."/>
            <person name="Willemsen M.H."/>
            <person name="van Bon B.W."/>
            <person name="Kleefstra T."/>
            <person name="Yntema H.G."/>
            <person name="Kroes T."/>
            <person name="Vulto-van Silfhout A.T."/>
            <person name="Koolen D.A."/>
            <person name="de Vries P."/>
            <person name="Gilissen C."/>
            <person name="del Rosario M."/>
            <person name="Hoischen A."/>
            <person name="Scheffer H."/>
            <person name="de Vries B.B."/>
            <person name="Brunner H.G."/>
            <person name="Veltman J.A."/>
            <person name="Vissers L.E."/>
        </authorList>
    </citation>
    <scope>VARIANT PRO-790</scope>
</reference>
<reference key="8">
    <citation type="journal article" date="2021" name="Front. Cell Dev. Biol.">
        <title>Biallelic variants in CFAP61 cause multiple morphological abnormalities of the flagella and male infertility.</title>
        <authorList>
            <person name="Ma A."/>
            <person name="Zeb A."/>
            <person name="Ali I."/>
            <person name="Zhao D."/>
            <person name="Khan A."/>
            <person name="Zhang B."/>
            <person name="Zhou J."/>
            <person name="Khan R."/>
            <person name="Zhang H."/>
            <person name="Zhang Y."/>
            <person name="Khan I."/>
            <person name="Shah W."/>
            <person name="Ali H."/>
            <person name="Javed A.R."/>
            <person name="Ma H."/>
            <person name="Shi Q."/>
        </authorList>
    </citation>
    <scope>VARIANT SPGF84 283-ARG--VAL-1237 DEL</scope>
    <scope>INVOLVEMENT IN SPGF84</scope>
    <scope>CHARACTERIZATION OF VARIANT SPGF84 283-ARG--VAL-1237 DEL</scope>
    <scope>FUNCTION</scope>
</reference>
<reference key="9">
    <citation type="journal article" date="2023" name="J. Med. Genet.">
        <title>Biallelic CFAP61 variants cause male infertility in humans and mice with severe oligoasthenoteratozoospermia.</title>
        <authorList>
            <person name="Hu T."/>
            <person name="Meng L."/>
            <person name="Tan C."/>
            <person name="Luo C."/>
            <person name="He W.B."/>
            <person name="Tu C."/>
            <person name="Zhang H."/>
            <person name="Du J."/>
            <person name="Nie H."/>
            <person name="Lu G.X."/>
            <person name="Lin G."/>
            <person name="Tan Y.Q."/>
        </authorList>
    </citation>
    <scope>VARIANTS SPGF84 CYS-552; ARG-556 AND ASN-971</scope>
</reference>
<keyword id="KW-0002">3D-structure</keyword>
<keyword id="KW-0025">Alternative splicing</keyword>
<keyword id="KW-0966">Cell projection</keyword>
<keyword id="KW-0969">Cilium</keyword>
<keyword id="KW-0963">Cytoplasm</keyword>
<keyword id="KW-0206">Cytoskeleton</keyword>
<keyword id="KW-0225">Disease variant</keyword>
<keyword id="KW-0282">Flagellum</keyword>
<keyword id="KW-1267">Proteomics identification</keyword>
<keyword id="KW-1185">Reference proteome</keyword>
<accession>Q8NHU2</accession>
<accession>A6NHA1</accession>
<accession>Q5JXV4</accession>
<accession>Q5TE18</accession>
<accession>Q8N5R9</accession>
<accession>Q96M59</accession>
<accession>Q9BQL2</accession>
<accession>Q9H127</accession>
<accession>Q9H128</accession>
<accession>Q9NQH4</accession>
<accession>Q9UFV8</accession>
<accession>Q9Y4V7</accession>
<comment type="function">
    <text evidence="1 5 6">Involved in sperm flagellum assembly (PubMed:34792097, PubMed:35174165). Plays an essential role in the formation of the radial spokes in flagellum axoneme (By similarity).</text>
</comment>
<comment type="subunit">
    <text evidence="1">Component of axonemal radial spokes, the protein complexes that link the outer microtubule doublets with the central pair of microtubules (By similarity). Interacts with CFAP91/MAATS1, ODAD2/ARMC4, RSPH3A, ROPN1, ROPN1L and RSPH9 (By similarity). Interacts with DYNLT1, DYNC1I2 and TUBB3 (By similarity). Interacts with WDR35, IFT22 and IFT81 (By similarity).</text>
</comment>
<comment type="subcellular location">
    <subcellularLocation>
        <location evidence="1">Cytoplasm</location>
        <location evidence="1">Cytoskeleton</location>
        <location evidence="1">Flagellum axoneme</location>
    </subcellularLocation>
</comment>
<comment type="alternative products">
    <event type="alternative splicing"/>
    <isoform>
        <id>Q8NHU2-1</id>
        <name>1</name>
        <sequence type="displayed"/>
    </isoform>
    <isoform>
        <id>Q8NHU2-3</id>
        <name>3</name>
        <sequence type="described" ref="VSP_003799 VSP_003800"/>
    </isoform>
    <isoform>
        <id>Q8NHU2-4</id>
        <name>4</name>
        <sequence type="described" ref="VSP_003798"/>
    </isoform>
    <isoform>
        <id>Q8NHU2-5</id>
        <name>5</name>
        <sequence type="described" ref="VSP_003802 VSP_003803 VSP_003804"/>
    </isoform>
    <isoform>
        <id>Q8NHU2-6</id>
        <name>6</name>
        <sequence type="described" ref="VSP_003802 VSP_013682 VSP_013683"/>
    </isoform>
    <text>Experimental confirmation may be lacking for some isoforms.</text>
</comment>
<comment type="disease" evidence="5 6 7">
    <disease id="DI-06699">
        <name>Spermatogenic failure 84</name>
        <acronym>SPGF84</acronym>
        <description>An autosomal recessive male infertility disorder characterized by multiple morphologic abnormalities of the sperm flagella, resulting in severely reduced motility. Some patients also have a reduced sperm count.</description>
        <dbReference type="MIM" id="620409"/>
    </disease>
    <text>The disease is caused by variants affecting the gene represented in this entry.</text>
</comment>
<comment type="miscellaneous">
    <molecule>Isoform 5</molecule>
    <text evidence="11">Created from a fragment entry and may await further characterization.</text>
</comment>
<dbReference type="EMBL" id="AK057364">
    <property type="protein sequence ID" value="BAB71452.1"/>
    <property type="molecule type" value="mRNA"/>
</dbReference>
<dbReference type="EMBL" id="AL117439">
    <property type="protein sequence ID" value="CAB55925.1"/>
    <property type="molecule type" value="mRNA"/>
</dbReference>
<dbReference type="EMBL" id="AL035454">
    <property type="status" value="NOT_ANNOTATED_CDS"/>
    <property type="molecule type" value="Genomic_DNA"/>
</dbReference>
<dbReference type="EMBL" id="AL049648">
    <property type="status" value="NOT_ANNOTATED_CDS"/>
    <property type="molecule type" value="Genomic_DNA"/>
</dbReference>
<dbReference type="EMBL" id="AL121721">
    <property type="status" value="NOT_ANNOTATED_CDS"/>
    <property type="molecule type" value="Genomic_DNA"/>
</dbReference>
<dbReference type="EMBL" id="AL161658">
    <property type="status" value="NOT_ANNOTATED_CDS"/>
    <property type="molecule type" value="Genomic_DNA"/>
</dbReference>
<dbReference type="EMBL" id="BC028708">
    <property type="protein sequence ID" value="AAH28708.2"/>
    <property type="molecule type" value="mRNA"/>
</dbReference>
<dbReference type="EMBL" id="BC031674">
    <property type="protein sequence ID" value="AAH31674.1"/>
    <property type="molecule type" value="mRNA"/>
</dbReference>
<dbReference type="CCDS" id="CCDS33447.1">
    <molecule id="Q8NHU2-1"/>
</dbReference>
<dbReference type="CCDS" id="CCDS54452.1">
    <molecule id="Q8NHU2-3"/>
</dbReference>
<dbReference type="RefSeq" id="NP_001161288.1">
    <molecule id="Q8NHU2-3"/>
    <property type="nucleotide sequence ID" value="NM_001167816.1"/>
</dbReference>
<dbReference type="RefSeq" id="NP_056400.3">
    <molecule id="Q8NHU2-1"/>
    <property type="nucleotide sequence ID" value="NM_015585.3"/>
</dbReference>
<dbReference type="RefSeq" id="XP_005260746.1">
    <property type="nucleotide sequence ID" value="XM_005260689.2"/>
</dbReference>
<dbReference type="RefSeq" id="XP_011527515.1">
    <property type="nucleotide sequence ID" value="XM_011529213.1"/>
</dbReference>
<dbReference type="PDB" id="8J07">
    <property type="method" value="EM"/>
    <property type="resolution" value="4.10 A"/>
    <property type="chains" value="d0=1-1237"/>
</dbReference>
<dbReference type="PDBsum" id="8J07"/>
<dbReference type="EMDB" id="EMD-35888"/>
<dbReference type="SMR" id="Q8NHU2"/>
<dbReference type="BioGRID" id="117532">
    <property type="interactions" value="1"/>
</dbReference>
<dbReference type="FunCoup" id="Q8NHU2">
    <property type="interactions" value="124"/>
</dbReference>
<dbReference type="IntAct" id="Q8NHU2">
    <property type="interactions" value="1"/>
</dbReference>
<dbReference type="MINT" id="Q8NHU2"/>
<dbReference type="STRING" id="9606.ENSP00000245957"/>
<dbReference type="GlyCosmos" id="Q8NHU2">
    <property type="glycosylation" value="2 sites, 1 glycan"/>
</dbReference>
<dbReference type="GlyGen" id="Q8NHU2">
    <property type="glycosylation" value="3 sites, 1 O-linked glycan (2 sites)"/>
</dbReference>
<dbReference type="iPTMnet" id="Q8NHU2"/>
<dbReference type="PhosphoSitePlus" id="Q8NHU2"/>
<dbReference type="BioMuta" id="CFAP61"/>
<dbReference type="DMDM" id="116241319"/>
<dbReference type="jPOST" id="Q8NHU2"/>
<dbReference type="MassIVE" id="Q8NHU2"/>
<dbReference type="PaxDb" id="9606-ENSP00000245957"/>
<dbReference type="PeptideAtlas" id="Q8NHU2"/>
<dbReference type="ProteomicsDB" id="73753">
    <molecule id="Q8NHU2-1"/>
</dbReference>
<dbReference type="ProteomicsDB" id="73754">
    <molecule id="Q8NHU2-3"/>
</dbReference>
<dbReference type="ProteomicsDB" id="73755">
    <molecule id="Q8NHU2-4"/>
</dbReference>
<dbReference type="ProteomicsDB" id="73756">
    <molecule id="Q8NHU2-5"/>
</dbReference>
<dbReference type="ProteomicsDB" id="73757">
    <molecule id="Q8NHU2-6"/>
</dbReference>
<dbReference type="Antibodypedia" id="2276">
    <property type="antibodies" value="67 antibodies from 13 providers"/>
</dbReference>
<dbReference type="DNASU" id="26074"/>
<dbReference type="Ensembl" id="ENST00000245957.10">
    <molecule id="Q8NHU2-1"/>
    <property type="protein sequence ID" value="ENSP00000245957.5"/>
    <property type="gene ID" value="ENSG00000089101.19"/>
</dbReference>
<dbReference type="Ensembl" id="ENST00000377293.5">
    <molecule id="Q8NHU2-5"/>
    <property type="protein sequence ID" value="ENSP00000366508.1"/>
    <property type="gene ID" value="ENSG00000089101.19"/>
</dbReference>
<dbReference type="Ensembl" id="ENST00000377306.5">
    <molecule id="Q8NHU2-3"/>
    <property type="protein sequence ID" value="ENSP00000366521.1"/>
    <property type="gene ID" value="ENSG00000089101.19"/>
</dbReference>
<dbReference type="Ensembl" id="ENST00000377308.6">
    <molecule id="Q8NHU2-6"/>
    <property type="protein sequence ID" value="ENSP00000366523.2"/>
    <property type="gene ID" value="ENSG00000089101.19"/>
</dbReference>
<dbReference type="Ensembl" id="ENST00000389656.4">
    <molecule id="Q8NHU2-5"/>
    <property type="protein sequence ID" value="ENSP00000374307.3"/>
    <property type="gene ID" value="ENSG00000089101.19"/>
</dbReference>
<dbReference type="Ensembl" id="ENST00000451767.6">
    <molecule id="Q8NHU2-3"/>
    <property type="protein sequence ID" value="ENSP00000414537.2"/>
    <property type="gene ID" value="ENSG00000089101.19"/>
</dbReference>
<dbReference type="GeneID" id="26074"/>
<dbReference type="KEGG" id="hsa:26074"/>
<dbReference type="MANE-Select" id="ENST00000245957.10">
    <property type="protein sequence ID" value="ENSP00000245957.5"/>
    <property type="RefSeq nucleotide sequence ID" value="NM_015585.4"/>
    <property type="RefSeq protein sequence ID" value="NP_056400.3"/>
</dbReference>
<dbReference type="UCSC" id="uc002wru.4">
    <molecule id="Q8NHU2-1"/>
    <property type="organism name" value="human"/>
</dbReference>
<dbReference type="AGR" id="HGNC:15872"/>
<dbReference type="CTD" id="26074"/>
<dbReference type="DisGeNET" id="26074"/>
<dbReference type="GeneCards" id="CFAP61"/>
<dbReference type="HGNC" id="HGNC:15872">
    <property type="gene designation" value="CFAP61"/>
</dbReference>
<dbReference type="HPA" id="ENSG00000089101">
    <property type="expression patterns" value="Tissue enhanced (fallopian tube, heart muscle, skeletal muscle, testis)"/>
</dbReference>
<dbReference type="MalaCards" id="CFAP61"/>
<dbReference type="MIM" id="620381">
    <property type="type" value="gene"/>
</dbReference>
<dbReference type="MIM" id="620409">
    <property type="type" value="phenotype"/>
</dbReference>
<dbReference type="neXtProt" id="NX_Q8NHU2"/>
<dbReference type="OpenTargets" id="ENSG00000089101"/>
<dbReference type="Orphanet" id="137893">
    <property type="disease" value="Male infertility due to large-headed multiflagellar polyploid spermatozoa"/>
</dbReference>
<dbReference type="PharmGKB" id="PA25741"/>
<dbReference type="VEuPathDB" id="HostDB:ENSG00000089101"/>
<dbReference type="eggNOG" id="ENOG502QSEC">
    <property type="taxonomic scope" value="Eukaryota"/>
</dbReference>
<dbReference type="GeneTree" id="ENSGT00390000004987"/>
<dbReference type="HOGENOM" id="CLU_037088_0_0_1"/>
<dbReference type="InParanoid" id="Q8NHU2"/>
<dbReference type="OMA" id="RWNEGQI"/>
<dbReference type="OrthoDB" id="382863at2759"/>
<dbReference type="PAN-GO" id="Q8NHU2">
    <property type="GO annotations" value="0 GO annotations based on evolutionary models"/>
</dbReference>
<dbReference type="PhylomeDB" id="Q8NHU2"/>
<dbReference type="TreeFam" id="TF323897"/>
<dbReference type="PathwayCommons" id="Q8NHU2"/>
<dbReference type="SignaLink" id="Q8NHU2"/>
<dbReference type="BioGRID-ORCS" id="26074">
    <property type="hits" value="9 hits in 1137 CRISPR screens"/>
</dbReference>
<dbReference type="ChiTaRS" id="CFAP61">
    <property type="organism name" value="human"/>
</dbReference>
<dbReference type="GenomeRNAi" id="26074"/>
<dbReference type="Pharos" id="Q8NHU2">
    <property type="development level" value="Tbio"/>
</dbReference>
<dbReference type="PRO" id="PR:Q8NHU2"/>
<dbReference type="Proteomes" id="UP000005640">
    <property type="component" value="Chromosome 20"/>
</dbReference>
<dbReference type="RNAct" id="Q8NHU2">
    <property type="molecule type" value="protein"/>
</dbReference>
<dbReference type="Bgee" id="ENSG00000089101">
    <property type="expression patterns" value="Expressed in buccal mucosa cell and 110 other cell types or tissues"/>
</dbReference>
<dbReference type="ExpressionAtlas" id="Q8NHU2">
    <property type="expression patterns" value="baseline and differential"/>
</dbReference>
<dbReference type="GO" id="GO:0005930">
    <property type="term" value="C:axoneme"/>
    <property type="evidence" value="ECO:0000250"/>
    <property type="project" value="UniProtKB"/>
</dbReference>
<dbReference type="GO" id="GO:0031514">
    <property type="term" value="C:motile cilium"/>
    <property type="evidence" value="ECO:0000250"/>
    <property type="project" value="UniProtKB"/>
</dbReference>
<dbReference type="GO" id="GO:0036126">
    <property type="term" value="C:sperm flagellum"/>
    <property type="evidence" value="ECO:0000318"/>
    <property type="project" value="GO_Central"/>
</dbReference>
<dbReference type="GO" id="GO:0003341">
    <property type="term" value="P:cilium movement"/>
    <property type="evidence" value="ECO:0000250"/>
    <property type="project" value="UniProtKB"/>
</dbReference>
<dbReference type="GO" id="GO:0044782">
    <property type="term" value="P:cilium organization"/>
    <property type="evidence" value="ECO:0000250"/>
    <property type="project" value="UniProtKB"/>
</dbReference>
<dbReference type="GO" id="GO:0120316">
    <property type="term" value="P:sperm flagellum assembly"/>
    <property type="evidence" value="ECO:0000315"/>
    <property type="project" value="UniProtKB"/>
</dbReference>
<dbReference type="FunFam" id="3.50.50.60:FF:000216">
    <property type="entry name" value="Cilia and flagella associated protein 61"/>
    <property type="match status" value="1"/>
</dbReference>
<dbReference type="Gene3D" id="3.50.50.60">
    <property type="entry name" value="FAD/NAD(P)-binding domain"/>
    <property type="match status" value="2"/>
</dbReference>
<dbReference type="InterPro" id="IPR038884">
    <property type="entry name" value="CFAP61"/>
</dbReference>
<dbReference type="InterPro" id="IPR056299">
    <property type="entry name" value="CFAP61_dimer"/>
</dbReference>
<dbReference type="InterPro" id="IPR032151">
    <property type="entry name" value="CFAP61_N"/>
</dbReference>
<dbReference type="InterPro" id="IPR036188">
    <property type="entry name" value="FAD/NAD-bd_sf"/>
</dbReference>
<dbReference type="PANTHER" id="PTHR21178">
    <property type="entry name" value="CILIA- AND FLAGELLA-ASSOCIATED PROTEIN 61"/>
    <property type="match status" value="1"/>
</dbReference>
<dbReference type="PANTHER" id="PTHR21178:SF8">
    <property type="entry name" value="CILIA- AND FLAGELLA-ASSOCIATED PROTEIN 61"/>
    <property type="match status" value="1"/>
</dbReference>
<dbReference type="Pfam" id="PF23150">
    <property type="entry name" value="CFAP61_dimer"/>
    <property type="match status" value="1"/>
</dbReference>
<dbReference type="Pfam" id="PF16092">
    <property type="entry name" value="CFAP61_N"/>
    <property type="match status" value="1"/>
</dbReference>
<dbReference type="SUPFAM" id="SSF51905">
    <property type="entry name" value="FAD/NAD(P)-binding domain"/>
    <property type="match status" value="1"/>
</dbReference>
<feature type="chain" id="PRO_0000079417" description="Cilia- and flagella-associated protein 61" evidence="11">
    <location>
        <begin position="1"/>
        <end position="1237"/>
    </location>
</feature>
<feature type="region of interest" description="Disordered" evidence="2">
    <location>
        <begin position="278"/>
        <end position="301"/>
    </location>
</feature>
<feature type="compositionally biased region" description="Basic and acidic residues" evidence="2">
    <location>
        <begin position="281"/>
        <end position="290"/>
    </location>
</feature>
<feature type="splice variant" id="VSP_003802" description="In isoform 5 and isoform 6." evidence="8 9">
    <location>
        <begin position="1"/>
        <end position="644"/>
    </location>
</feature>
<feature type="splice variant" id="VSP_003798" description="In isoform 4." evidence="11">
    <location>
        <begin position="343"/>
        <end position="402"/>
    </location>
</feature>
<feature type="splice variant" id="VSP_003799" description="In isoform 3." evidence="10">
    <original>SINIRFAT</original>
    <variation>NICLGRSS</variation>
    <location>
        <begin position="463"/>
        <end position="470"/>
    </location>
</feature>
<feature type="splice variant" id="VSP_003800" description="In isoform 3." evidence="10">
    <location>
        <begin position="471"/>
        <end position="1237"/>
    </location>
</feature>
<feature type="splice variant" id="VSP_003803" description="In isoform 5." evidence="9">
    <original>GNIIVYGNTI</original>
    <variation>DGGRASVLFC</variation>
    <location>
        <begin position="835"/>
        <end position="844"/>
    </location>
</feature>
<feature type="splice variant" id="VSP_003804" description="In isoform 5." evidence="9">
    <location>
        <begin position="845"/>
        <end position="1237"/>
    </location>
</feature>
<feature type="splice variant" id="VSP_013682" description="In isoform 6." evidence="8">
    <original>MFFSFCEKNVDYETFKALNDACLVYDSRLVID</original>
    <variation>GAFFLGLTIICILPSLPFQLPWRYKWHSLIMV</variation>
    <location>
        <begin position="933"/>
        <end position="964"/>
    </location>
</feature>
<feature type="splice variant" id="VSP_013683" description="In isoform 6." evidence="8">
    <location>
        <begin position="965"/>
        <end position="1237"/>
    </location>
</feature>
<feature type="sequence variant" id="VAR_027981" description="In dbSNP:rs17852602." evidence="3">
    <original>P</original>
    <variation>R</variation>
    <location>
        <position position="74"/>
    </location>
</feature>
<feature type="sequence variant" id="VAR_027982" description="In dbSNP:rs6075614.">
    <original>H</original>
    <variation>R</variation>
    <location>
        <position position="254"/>
    </location>
</feature>
<feature type="sequence variant" id="VAR_088626" description="In SPGF84; pathogenic; no protein detected in patient sperm." evidence="6">
    <location>
        <begin position="283"/>
        <end position="1237"/>
    </location>
</feature>
<feature type="sequence variant" id="VAR_027983" description="In dbSNP:rs6081901." evidence="3">
    <original>V</original>
    <variation>I</variation>
    <location>
        <position position="369"/>
    </location>
</feature>
<feature type="sequence variant" id="VAR_027984" description="In dbSNP:rs6075628.">
    <original>P</original>
    <variation>L</variation>
    <location>
        <position position="371"/>
    </location>
</feature>
<feature type="sequence variant" id="VAR_027985" description="In dbSNP:rs7344530.">
    <original>D</original>
    <variation>E</variation>
    <location>
        <position position="505"/>
    </location>
</feature>
<feature type="sequence variant" id="VAR_088627" description="In SPGF84; uncertain significance; dbSNP:rs370567248." evidence="7">
    <original>R</original>
    <variation>C</variation>
    <location>
        <position position="552"/>
    </location>
</feature>
<feature type="sequence variant" id="VAR_088628" description="In SPGF84; uncertain significance; dbSNP:rs116775353." evidence="7">
    <original>G</original>
    <variation>R</variation>
    <location>
        <position position="556"/>
    </location>
</feature>
<feature type="sequence variant" id="VAR_027986" description="In dbSNP:rs6081930.">
    <original>P</original>
    <variation>L</variation>
    <location>
        <position position="660"/>
    </location>
</feature>
<feature type="sequence variant" id="VAR_027987" description="In dbSNP:rs6046740.">
    <original>V</original>
    <variation>I</variation>
    <location>
        <position position="671"/>
    </location>
</feature>
<feature type="sequence variant" id="VAR_069396" evidence="4">
    <original>T</original>
    <variation>P</variation>
    <location>
        <position position="790"/>
    </location>
</feature>
<feature type="sequence variant" id="VAR_088629" description="In SPGF84; uncertain significance; dbSNP:rs115717092." evidence="7">
    <original>D</original>
    <variation>N</variation>
    <location>
        <position position="971"/>
    </location>
</feature>
<feature type="sequence conflict" description="In Ref. 4; AAH31674." evidence="11" ref="4">
    <original>N</original>
    <variation>S</variation>
    <location>
        <position position="650"/>
    </location>
</feature>
<feature type="sequence conflict" description="In Ref. 1; BAB71452." evidence="11" ref="1">
    <original>L</original>
    <variation>P</variation>
    <location sequence="Q8NHU2-6">
        <position position="123"/>
    </location>
</feature>
<evidence type="ECO:0000250" key="1">
    <source>
        <dbReference type="UniProtKB" id="Q8CEL2"/>
    </source>
</evidence>
<evidence type="ECO:0000256" key="2">
    <source>
        <dbReference type="SAM" id="MobiDB-lite"/>
    </source>
</evidence>
<evidence type="ECO:0000269" key="3">
    <source>
    </source>
</evidence>
<evidence type="ECO:0000269" key="4">
    <source>
    </source>
</evidence>
<evidence type="ECO:0000269" key="5">
    <source>
    </source>
</evidence>
<evidence type="ECO:0000269" key="6">
    <source>
    </source>
</evidence>
<evidence type="ECO:0000269" key="7">
    <source>
    </source>
</evidence>
<evidence type="ECO:0000303" key="8">
    <source>
    </source>
</evidence>
<evidence type="ECO:0000303" key="9">
    <source>
    </source>
</evidence>
<evidence type="ECO:0000303" key="10">
    <source>
    </source>
</evidence>
<evidence type="ECO:0000305" key="11"/>
<evidence type="ECO:0000312" key="12">
    <source>
        <dbReference type="HGNC" id="HGNC:15872"/>
    </source>
</evidence>
<sequence length="1237" mass="141349">MSVLTSPRGKVEVVHCRRTESQDVYCIKSLIRKFTCKLFGKLNIIYLLEKANLAVTLCNDKEEIMAQATFLDYPNWNVAKQDDWVSVFRELDSDIPCTPLNTLFMHLFVAVDEYSVGCCKEILRTVYKAVPELHFIFLIVPSYMSLGSTLITVFDQVGNIPCLTYEEDFAVHICHRHSHYPQLHVRKARVEDHDDLMPIFMRYDTILKETYGEYFLAELIEAQDEENHAVVCEVEGTAVGFMSVCSRVNMQLLHECFDLGPFHGLCFPHPDDVLESPQDLSVRRSQDAELRSSSQGSQKIVEELQEPVSPDTMENIQGNIAREAASEEALTAVQSGNVSEPEDIEKLSDISTGYAQYHHVSSRSLASLVLPEEPVHFRPIYRGASAAFCIQLFCIDEKYEARSLDFMNFVFSLFSDKNFCVISLPHLTPEFFLIQNFVKMVPFNTCTLEQDLYVFHRAGLLKSINIRFATLLDTPGVENLVSTLMLNKSILEDLDRYNKARKDPDGTLLQAFVAEVAEQIVGIAVIRNEMDIEYIRSHYNIEDFIYFSHHQREEHGHMHHFALNPIFRHYTKFFLKEILRLGFKSCLYYRVYPKSREGKFQNPYAHSLTSALHYLVPVRPRRQIVYPLEKLGINAPSKAVSKDPMSYALNHTNRKLTLEPKITVNAKIIVVGASSVGISFLETLVFCSHMKFNNLTLISTHGLPGKKLLDTEQRKFLASDHCFNDKDYALMSLCSWVNVVVGRMTGIDRAAKHVVLSTDEIVPYDHLILCTGQQYQVPCPTEADISQHLTNREVPNSSQRRYTGKVPCNHFTLNEEEDCFKALIWIRNNSITTEGNIIVYGNTIDTYTTVETLLNLGVSGSRIHLVQPPPASTITCINNYSVESAVADALGAAGVTMYRDAILAQWNDGLHPDPIYSASFTTPTKPFRLQCSMFFSFCEKNVDYETFKALNDACLVYDSRLVIDTNFHTNDIAIRAAGSLTKFSNRYYSNEWTHSNFSSKEIGFQLAAAMLHLFDPTLEPVTEPPANLDRLIPMYKGAKIQGGILPGSYHYLHIAKPAIPTPLEVQMAQPNYGLELVTGSAKNGTYFRIHINKYKMVETITCLSREPFPASNYIRLFGQHEQLLNNLCARYDENLITDLYSYFTEPWCLALFHDRFIDLRKELRQILASKEEEDLPSIEQLAHQIEDEEINPTEKPRQYLKRVFEESIYKTLVERSTLDYLHYNRYHLPMYAWPGIV</sequence>
<organism>
    <name type="scientific">Homo sapiens</name>
    <name type="common">Human</name>
    <dbReference type="NCBI Taxonomy" id="9606"/>
    <lineage>
        <taxon>Eukaryota</taxon>
        <taxon>Metazoa</taxon>
        <taxon>Chordata</taxon>
        <taxon>Craniata</taxon>
        <taxon>Vertebrata</taxon>
        <taxon>Euteleostomi</taxon>
        <taxon>Mammalia</taxon>
        <taxon>Eutheria</taxon>
        <taxon>Euarchontoglires</taxon>
        <taxon>Primates</taxon>
        <taxon>Haplorrhini</taxon>
        <taxon>Catarrhini</taxon>
        <taxon>Hominidae</taxon>
        <taxon>Homo</taxon>
    </lineage>
</organism>
<name>CFA61_HUMAN</name>
<protein>
    <recommendedName>
        <fullName evidence="12">Cilia- and flagella-associated protein 61</fullName>
    </recommendedName>
</protein>